<reference key="1">
    <citation type="journal article" date="2004" name="Nature">
        <title>Genome evolution in yeasts.</title>
        <authorList>
            <person name="Dujon B."/>
            <person name="Sherman D."/>
            <person name="Fischer G."/>
            <person name="Durrens P."/>
            <person name="Casaregola S."/>
            <person name="Lafontaine I."/>
            <person name="de Montigny J."/>
            <person name="Marck C."/>
            <person name="Neuveglise C."/>
            <person name="Talla E."/>
            <person name="Goffard N."/>
            <person name="Frangeul L."/>
            <person name="Aigle M."/>
            <person name="Anthouard V."/>
            <person name="Babour A."/>
            <person name="Barbe V."/>
            <person name="Barnay S."/>
            <person name="Blanchin S."/>
            <person name="Beckerich J.-M."/>
            <person name="Beyne E."/>
            <person name="Bleykasten C."/>
            <person name="Boisrame A."/>
            <person name="Boyer J."/>
            <person name="Cattolico L."/>
            <person name="Confanioleri F."/>
            <person name="de Daruvar A."/>
            <person name="Despons L."/>
            <person name="Fabre E."/>
            <person name="Fairhead C."/>
            <person name="Ferry-Dumazet H."/>
            <person name="Groppi A."/>
            <person name="Hantraye F."/>
            <person name="Hennequin C."/>
            <person name="Jauniaux N."/>
            <person name="Joyet P."/>
            <person name="Kachouri R."/>
            <person name="Kerrest A."/>
            <person name="Koszul R."/>
            <person name="Lemaire M."/>
            <person name="Lesur I."/>
            <person name="Ma L."/>
            <person name="Muller H."/>
            <person name="Nicaud J.-M."/>
            <person name="Nikolski M."/>
            <person name="Oztas S."/>
            <person name="Ozier-Kalogeropoulos O."/>
            <person name="Pellenz S."/>
            <person name="Potier S."/>
            <person name="Richard G.-F."/>
            <person name="Straub M.-L."/>
            <person name="Suleau A."/>
            <person name="Swennen D."/>
            <person name="Tekaia F."/>
            <person name="Wesolowski-Louvel M."/>
            <person name="Westhof E."/>
            <person name="Wirth B."/>
            <person name="Zeniou-Meyer M."/>
            <person name="Zivanovic Y."/>
            <person name="Bolotin-Fukuhara M."/>
            <person name="Thierry A."/>
            <person name="Bouchier C."/>
            <person name="Caudron B."/>
            <person name="Scarpelli C."/>
            <person name="Gaillardin C."/>
            <person name="Weissenbach J."/>
            <person name="Wincker P."/>
            <person name="Souciet J.-L."/>
        </authorList>
    </citation>
    <scope>NUCLEOTIDE SEQUENCE [LARGE SCALE GENOMIC DNA]</scope>
    <source>
        <strain>ATCC 2001 / BCRC 20586 / JCM 3761 / NBRC 0622 / NRRL Y-65 / CBS 138</strain>
    </source>
</reference>
<gene>
    <name type="primary">RRD2</name>
    <name type="ordered locus">CAGL0M02255g</name>
</gene>
<name>PTPA2_CANGA</name>
<organism>
    <name type="scientific">Candida glabrata (strain ATCC 2001 / BCRC 20586 / JCM 3761 / NBRC 0622 / NRRL Y-65 / CBS 138)</name>
    <name type="common">Yeast</name>
    <name type="synonym">Nakaseomyces glabratus</name>
    <dbReference type="NCBI Taxonomy" id="284593"/>
    <lineage>
        <taxon>Eukaryota</taxon>
        <taxon>Fungi</taxon>
        <taxon>Dikarya</taxon>
        <taxon>Ascomycota</taxon>
        <taxon>Saccharomycotina</taxon>
        <taxon>Saccharomycetes</taxon>
        <taxon>Saccharomycetales</taxon>
        <taxon>Saccharomycetaceae</taxon>
        <taxon>Nakaseomyces</taxon>
    </lineage>
</organism>
<proteinExistence type="inferred from homology"/>
<accession>Q6FK00</accession>
<evidence type="ECO:0000250" key="1"/>
<evidence type="ECO:0000305" key="2"/>
<dbReference type="EC" id="5.2.1.8"/>
<dbReference type="EMBL" id="CR380959">
    <property type="protein sequence ID" value="CAG62420.1"/>
    <property type="molecule type" value="Genomic_DNA"/>
</dbReference>
<dbReference type="RefSeq" id="XP_449444.1">
    <property type="nucleotide sequence ID" value="XM_449444.1"/>
</dbReference>
<dbReference type="SMR" id="Q6FK00"/>
<dbReference type="FunCoup" id="Q6FK00">
    <property type="interactions" value="560"/>
</dbReference>
<dbReference type="STRING" id="284593.Q6FK00"/>
<dbReference type="EnsemblFungi" id="CAGL0M02255g-T">
    <property type="protein sequence ID" value="CAGL0M02255g-T-p1"/>
    <property type="gene ID" value="CAGL0M02255g"/>
</dbReference>
<dbReference type="KEGG" id="cgr:2891770"/>
<dbReference type="CGD" id="CAL0137449">
    <property type="gene designation" value="CAGL0M02255g"/>
</dbReference>
<dbReference type="VEuPathDB" id="FungiDB:CAGL0M02255g"/>
<dbReference type="eggNOG" id="KOG2867">
    <property type="taxonomic scope" value="Eukaryota"/>
</dbReference>
<dbReference type="HOGENOM" id="CLU_030733_0_0_1"/>
<dbReference type="InParanoid" id="Q6FK00"/>
<dbReference type="OMA" id="SWIKINA"/>
<dbReference type="Proteomes" id="UP000002428">
    <property type="component" value="Chromosome M"/>
</dbReference>
<dbReference type="GO" id="GO:0005737">
    <property type="term" value="C:cytoplasm"/>
    <property type="evidence" value="ECO:0007669"/>
    <property type="project" value="UniProtKB-SubCell"/>
</dbReference>
<dbReference type="GO" id="GO:0005634">
    <property type="term" value="C:nucleus"/>
    <property type="evidence" value="ECO:0007669"/>
    <property type="project" value="TreeGrafter"/>
</dbReference>
<dbReference type="GO" id="GO:0000159">
    <property type="term" value="C:protein phosphatase type 2A complex"/>
    <property type="evidence" value="ECO:0007669"/>
    <property type="project" value="EnsemblFungi"/>
</dbReference>
<dbReference type="GO" id="GO:0003755">
    <property type="term" value="F:peptidyl-prolyl cis-trans isomerase activity"/>
    <property type="evidence" value="ECO:0007669"/>
    <property type="project" value="UniProtKB-KW"/>
</dbReference>
<dbReference type="GO" id="GO:0008160">
    <property type="term" value="F:protein tyrosine phosphatase activator activity"/>
    <property type="evidence" value="ECO:0007669"/>
    <property type="project" value="TreeGrafter"/>
</dbReference>
<dbReference type="GO" id="GO:0007052">
    <property type="term" value="P:mitotic spindle organization"/>
    <property type="evidence" value="ECO:0007669"/>
    <property type="project" value="EnsemblFungi"/>
</dbReference>
<dbReference type="GO" id="GO:0006970">
    <property type="term" value="P:response to osmotic stress"/>
    <property type="evidence" value="ECO:0007669"/>
    <property type="project" value="EnsemblFungi"/>
</dbReference>
<dbReference type="CDD" id="cd04087">
    <property type="entry name" value="PTPA"/>
    <property type="match status" value="1"/>
</dbReference>
<dbReference type="FunFam" id="1.20.120.1150:FF:000002">
    <property type="entry name" value="Serine/threonine-protein phosphatase 2A activator"/>
    <property type="match status" value="1"/>
</dbReference>
<dbReference type="Gene3D" id="1.20.120.1150">
    <property type="match status" value="1"/>
</dbReference>
<dbReference type="InterPro" id="IPR004327">
    <property type="entry name" value="Phstyr_phstse_ac"/>
</dbReference>
<dbReference type="InterPro" id="IPR043170">
    <property type="entry name" value="PTPA_C_lid"/>
</dbReference>
<dbReference type="InterPro" id="IPR037218">
    <property type="entry name" value="PTPA_sf"/>
</dbReference>
<dbReference type="PANTHER" id="PTHR10012">
    <property type="entry name" value="SERINE/THREONINE-PROTEIN PHOSPHATASE 2A REGULATORY SUBUNIT B"/>
    <property type="match status" value="1"/>
</dbReference>
<dbReference type="PANTHER" id="PTHR10012:SF5">
    <property type="entry name" value="SERINE_THREONINE-PROTEIN PHOSPHATASE 2A ACTIVATOR 2"/>
    <property type="match status" value="1"/>
</dbReference>
<dbReference type="Pfam" id="PF03095">
    <property type="entry name" value="PTPA"/>
    <property type="match status" value="1"/>
</dbReference>
<dbReference type="PIRSF" id="PIRSF016325">
    <property type="entry name" value="Phstyr_phstse_ac"/>
    <property type="match status" value="1"/>
</dbReference>
<dbReference type="SUPFAM" id="SSF140984">
    <property type="entry name" value="PTPA-like"/>
    <property type="match status" value="1"/>
</dbReference>
<feature type="chain" id="PRO_0000226110" description="Serine/threonine-protein phosphatase 2A activator 2">
    <location>
        <begin position="1"/>
        <end position="358"/>
    </location>
</feature>
<protein>
    <recommendedName>
        <fullName>Serine/threonine-protein phosphatase 2A activator 2</fullName>
        <ecNumber>5.2.1.8</ecNumber>
    </recommendedName>
    <alternativeName>
        <fullName>Peptidyl-prolyl cis-trans isomerase PTPA-2</fullName>
        <shortName>PPIase PTPA-2</shortName>
        <shortName>Rotamase PTPA-2</shortName>
    </alternativeName>
    <alternativeName>
        <fullName>Phosphotyrosyl phosphatase activator 2</fullName>
    </alternativeName>
</protein>
<keyword id="KW-0963">Cytoplasm</keyword>
<keyword id="KW-0413">Isomerase</keyword>
<keyword id="KW-1185">Reference proteome</keyword>
<keyword id="KW-0697">Rotamase</keyword>
<comment type="function">
    <text evidence="1">PPIases accelerate the folding of proteins. It catalyzes the cis-trans isomerization of proline imidic peptide bonds in oligopeptides. Acts as a regulatory subunit for PP2A-like phosphatases modulating their activity or substrate specificity, probably by inducing a conformational change in the catalytic subunit, a direct target of the PPIase. Can reactivate inactive phosphatase PP2A-phosphatase methylesterase complexes (PP2Ai) in presence of ATP and Mg(2+) by dissociating the inactive form from the complex (By similarity).</text>
</comment>
<comment type="catalytic activity">
    <reaction>
        <text>[protein]-peptidylproline (omega=180) = [protein]-peptidylproline (omega=0)</text>
        <dbReference type="Rhea" id="RHEA:16237"/>
        <dbReference type="Rhea" id="RHEA-COMP:10747"/>
        <dbReference type="Rhea" id="RHEA-COMP:10748"/>
        <dbReference type="ChEBI" id="CHEBI:83833"/>
        <dbReference type="ChEBI" id="CHEBI:83834"/>
        <dbReference type="EC" id="5.2.1.8"/>
    </reaction>
</comment>
<comment type="subcellular location">
    <subcellularLocation>
        <location evidence="1">Cytoplasm</location>
    </subcellularLocation>
</comment>
<comment type="similarity">
    <text evidence="2">Belongs to the PTPA-type PPIase family.</text>
</comment>
<sequence>MIPSKRILTDKDVKIWEESETREDILSFIESLAKAVEGFENDQVSEPVSDSVQSTIAVLTEIDKLIKLHPVIQDKNTSRFGKVEFRDFYDDVCEKADDLLSSHFPALTSEQIEQLSIYLQESWGNKRRIDYGSGHELNFICFLYGLTHYKIFDLQRDARNLVLVLFIEYLKIMREIETLYWLEPAGSHGVWGLDDYHFLPFLFGAFQLAPHKHLKPKSIHNEELVEMFADKYLYFGCIAFINSVKTSTSLRWHSPMLDDISGVKKWSKVAEGMIKMYKAEVLGKLPIMQHFYFSEFLVCPEGISEPRTHIHNGDEDDDQCCQDGAAHNTWGDCCGIKIPSLYAANAMEKQSHKPIPFD</sequence>